<comment type="function">
    <text evidence="1">Part of the ABC transporter complex BtuCDF involved in vitamin B12 import. Involved in the translocation of the substrate across the membrane.</text>
</comment>
<comment type="subunit">
    <text evidence="1">The complex is composed of two ATP-binding proteins (BtuD), two transmembrane proteins (BtuC) and a solute-binding protein (BtuF).</text>
</comment>
<comment type="subcellular location">
    <subcellularLocation>
        <location evidence="1">Cell inner membrane</location>
        <topology evidence="1">Multi-pass membrane protein</topology>
    </subcellularLocation>
</comment>
<comment type="similarity">
    <text evidence="1">Belongs to the binding-protein-dependent transport system permease family. FecCD subfamily.</text>
</comment>
<name>BTUC_YERPG</name>
<protein>
    <recommendedName>
        <fullName evidence="1">Vitamin B12 import system permease protein BtuC</fullName>
    </recommendedName>
</protein>
<accession>A9R099</accession>
<evidence type="ECO:0000255" key="1">
    <source>
        <dbReference type="HAMAP-Rule" id="MF_01004"/>
    </source>
</evidence>
<keyword id="KW-0997">Cell inner membrane</keyword>
<keyword id="KW-1003">Cell membrane</keyword>
<keyword id="KW-0472">Membrane</keyword>
<keyword id="KW-0812">Transmembrane</keyword>
<keyword id="KW-1133">Transmembrane helix</keyword>
<keyword id="KW-0813">Transport</keyword>
<dbReference type="EMBL" id="CP000901">
    <property type="protein sequence ID" value="ABX85142.1"/>
    <property type="molecule type" value="Genomic_DNA"/>
</dbReference>
<dbReference type="RefSeq" id="WP_002220283.1">
    <property type="nucleotide sequence ID" value="NZ_CP009935.1"/>
</dbReference>
<dbReference type="SMR" id="A9R099"/>
<dbReference type="GeneID" id="57976252"/>
<dbReference type="KEGG" id="ypg:YpAngola_A2616"/>
<dbReference type="PATRIC" id="fig|349746.12.peg.3643"/>
<dbReference type="GO" id="GO:0005886">
    <property type="term" value="C:plasma membrane"/>
    <property type="evidence" value="ECO:0007669"/>
    <property type="project" value="UniProtKB-SubCell"/>
</dbReference>
<dbReference type="GO" id="GO:0090482">
    <property type="term" value="F:vitamin transmembrane transporter activity"/>
    <property type="evidence" value="ECO:0007669"/>
    <property type="project" value="UniProtKB-UniRule"/>
</dbReference>
<dbReference type="GO" id="GO:0015889">
    <property type="term" value="P:cobalamin transport"/>
    <property type="evidence" value="ECO:0007669"/>
    <property type="project" value="UniProtKB-UniRule"/>
</dbReference>
<dbReference type="CDD" id="cd06550">
    <property type="entry name" value="TM_ABC_iron-siderophores_like"/>
    <property type="match status" value="1"/>
</dbReference>
<dbReference type="FunFam" id="1.10.3470.10:FF:000001">
    <property type="entry name" value="Vitamin B12 ABC transporter permease BtuC"/>
    <property type="match status" value="1"/>
</dbReference>
<dbReference type="Gene3D" id="1.10.3470.10">
    <property type="entry name" value="ABC transporter involved in vitamin B12 uptake, BtuC"/>
    <property type="match status" value="1"/>
</dbReference>
<dbReference type="HAMAP" id="MF_01004">
    <property type="entry name" value="BtuC"/>
    <property type="match status" value="1"/>
</dbReference>
<dbReference type="InterPro" id="IPR037294">
    <property type="entry name" value="ABC_BtuC-like"/>
</dbReference>
<dbReference type="InterPro" id="IPR023691">
    <property type="entry name" value="ABC_transptr_BtuC"/>
</dbReference>
<dbReference type="InterPro" id="IPR000522">
    <property type="entry name" value="ABC_transptr_permease_BtuC"/>
</dbReference>
<dbReference type="NCBIfam" id="NF003001">
    <property type="entry name" value="PRK03784.1"/>
    <property type="match status" value="1"/>
</dbReference>
<dbReference type="PANTHER" id="PTHR30472">
    <property type="entry name" value="FERRIC ENTEROBACTIN TRANSPORT SYSTEM PERMEASE PROTEIN"/>
    <property type="match status" value="1"/>
</dbReference>
<dbReference type="PANTHER" id="PTHR30472:SF29">
    <property type="entry name" value="VITAMIN B12 IMPORT SYSTEM PERMEASE PROTEIN BTUC"/>
    <property type="match status" value="1"/>
</dbReference>
<dbReference type="Pfam" id="PF01032">
    <property type="entry name" value="FecCD"/>
    <property type="match status" value="1"/>
</dbReference>
<dbReference type="SUPFAM" id="SSF81345">
    <property type="entry name" value="ABC transporter involved in vitamin B12 uptake, BtuC"/>
    <property type="match status" value="1"/>
</dbReference>
<organism>
    <name type="scientific">Yersinia pestis bv. Antiqua (strain Angola)</name>
    <dbReference type="NCBI Taxonomy" id="349746"/>
    <lineage>
        <taxon>Bacteria</taxon>
        <taxon>Pseudomonadati</taxon>
        <taxon>Pseudomonadota</taxon>
        <taxon>Gammaproteobacteria</taxon>
        <taxon>Enterobacterales</taxon>
        <taxon>Yersiniaceae</taxon>
        <taxon>Yersinia</taxon>
    </lineage>
</organism>
<sequence length="335" mass="36332">MQTSQLFTALQQRQRQRDYRYLTGLVVMLLFALLISLCAGDVWIWPEHWFSESGKLFVWQLRLPRSMAVIMVGASLAVSGAVMQALFENPLAEPGLLGVANGAGVALVTAVLLGHGLLPIWVLSTCAIIGALLMTSILLSFTRRRLLTNAQLLLVGVALGIICSAMMTWAVYFSTSLDLRQLMYWMMGGFSGVDWRQQSLVLALLPTVIWLCCQGRVLNFMSLGEQQARQLGVSLHLWRNLLVLAIGLLVGISVALAGVISFIGLVIPHILRLTGLTDQRRLLAGCAFAGGGVLLLADVVARTVLSSAELPIGVVTATLGSPLFIWLLIRVKGVK</sequence>
<reference key="1">
    <citation type="journal article" date="2010" name="J. Bacteriol.">
        <title>Genome sequence of the deep-rooted Yersinia pestis strain Angola reveals new insights into the evolution and pangenome of the plague bacterium.</title>
        <authorList>
            <person name="Eppinger M."/>
            <person name="Worsham P.L."/>
            <person name="Nikolich M.P."/>
            <person name="Riley D.R."/>
            <person name="Sebastian Y."/>
            <person name="Mou S."/>
            <person name="Achtman M."/>
            <person name="Lindler L.E."/>
            <person name="Ravel J."/>
        </authorList>
    </citation>
    <scope>NUCLEOTIDE SEQUENCE [LARGE SCALE GENOMIC DNA]</scope>
    <source>
        <strain>Angola</strain>
    </source>
</reference>
<gene>
    <name evidence="1" type="primary">btuC</name>
    <name type="ordered locus">YpAngola_A2616</name>
</gene>
<feature type="chain" id="PRO_1000201560" description="Vitamin B12 import system permease protein BtuC">
    <location>
        <begin position="1"/>
        <end position="335"/>
    </location>
</feature>
<feature type="transmembrane region" description="Helical" evidence="1">
    <location>
        <begin position="25"/>
        <end position="45"/>
    </location>
</feature>
<feature type="transmembrane region" description="Helical" evidence="1">
    <location>
        <begin position="67"/>
        <end position="87"/>
    </location>
</feature>
<feature type="transmembrane region" description="Helical" evidence="1">
    <location>
        <begin position="94"/>
        <end position="113"/>
    </location>
</feature>
<feature type="transmembrane region" description="Helical" evidence="1">
    <location>
        <begin position="117"/>
        <end position="139"/>
    </location>
</feature>
<feature type="transmembrane region" description="Helical" evidence="1">
    <location>
        <begin position="153"/>
        <end position="173"/>
    </location>
</feature>
<feature type="transmembrane region" description="Helical" evidence="1">
    <location>
        <begin position="243"/>
        <end position="263"/>
    </location>
</feature>
<feature type="transmembrane region" description="Helical" evidence="1">
    <location>
        <begin position="281"/>
        <end position="301"/>
    </location>
</feature>
<feature type="transmembrane region" description="Helical" evidence="1">
    <location>
        <begin position="309"/>
        <end position="329"/>
    </location>
</feature>
<proteinExistence type="inferred from homology"/>